<comment type="allergen">
    <text evidence="1 5 6">Causes an allergic reaction in human; allergic reactions against this protein result from initial sensitization to the major allergen from birch pollen, Bet v 1.</text>
</comment>
<comment type="similarity">
    <text evidence="4">Belongs to the BetVI family.</text>
</comment>
<protein>
    <recommendedName>
        <fullName evidence="3">Major allergen Mal d 1</fullName>
    </recommendedName>
    <alternativeName>
        <fullName evidence="3">Allergen Mal d I</fullName>
    </alternativeName>
    <allergenName evidence="3">Mal d 1</allergenName>
</protein>
<feature type="initiator methionine" description="Removed" evidence="1 2">
    <location>
        <position position="1"/>
    </location>
</feature>
<feature type="chain" id="PRO_0000154190" description="Major allergen Mal d 1">
    <location>
        <begin position="2"/>
        <end position="159"/>
    </location>
</feature>
<feature type="site" description="Crucial for IgE recognition during allergic reaction in human" evidence="1">
    <location>
        <position position="11"/>
    </location>
</feature>
<feature type="site" description="Crucial for IgE recognition during allergic reaction in human" evidence="1">
    <location>
        <position position="31"/>
    </location>
</feature>
<feature type="site" description="Crucial for IgE recognition during allergic reaction in human" evidence="1">
    <location>
        <position position="58"/>
    </location>
</feature>
<feature type="site" description="Crucial for IgE recognition during allergic reaction in human" evidence="1">
    <location>
        <position position="113"/>
    </location>
</feature>
<feature type="site" description="Crucial for IgE recognition during allergic reaction in human" evidence="1">
    <location>
        <position position="114"/>
    </location>
</feature>
<feature type="sequence variant">
    <original>F</original>
    <variation>Y</variation>
    <location>
        <position position="10"/>
    </location>
</feature>
<feature type="mutagenesis site" description="Reduced capacity to bind specific IgE leading to attenuated allergic reactions in human; when associated with P-11, N-58, C-113 and V-114." evidence="1">
    <original>T</original>
    <variation>P</variation>
    <location>
        <position position="11"/>
    </location>
</feature>
<feature type="mutagenesis site" description="Reduced capacity to bind specific IgE leading to attenuated allergic reactions in human; when associated with P-11, N-58, C-113 and V-114." evidence="1">
    <original>I</original>
    <variation>V</variation>
    <location>
        <position position="31"/>
    </location>
</feature>
<feature type="mutagenesis site" description="Reduced capacity to bind specific IgE leading to attenuated allergic reactions in human; when associated with P-11, V-31, C-113 and V-114." evidence="1">
    <original>T</original>
    <variation>N</variation>
    <location>
        <position position="58"/>
    </location>
</feature>
<feature type="mutagenesis site" description="Reduced capacity to bind specific IgE leading to attenuated allergic reactions in human; when associated with P-11, V-31, N-58 and V-114." evidence="1">
    <original>T</original>
    <variation>C</variation>
    <location>
        <position position="113"/>
    </location>
</feature>
<feature type="mutagenesis site" description="Reduced capacity to bind specific IgE leading to attenuated allergic reactions in human; when associated with P-11, V-31, N-58 and C-113." evidence="1">
    <original>I</original>
    <variation>V</variation>
    <location>
        <position position="114"/>
    </location>
</feature>
<feature type="sequence conflict" description="In Ref. 3; AA sequence." evidence="4" ref="3">
    <original>S</original>
    <variation>P</variation>
    <location>
        <position position="17"/>
    </location>
</feature>
<feature type="sequence conflict" description="In Ref. 2; CAA88833." evidence="4" ref="2">
    <original>S</original>
    <variation>A</variation>
    <location>
        <position position="112"/>
    </location>
</feature>
<feature type="sequence conflict" description="In Ref. 2; CAA88833." evidence="4" ref="2">
    <original>T</original>
    <variation>P</variation>
    <location>
        <position position="122"/>
    </location>
</feature>
<feature type="sequence conflict" description="In Ref. 2; CAA88833." evidence="4" ref="2">
    <original>A</original>
    <variation>G</variation>
    <location>
        <position position="140"/>
    </location>
</feature>
<feature type="sequence conflict" description="In Ref. 2; CAA88833." evidence="4" ref="2">
    <original>D</original>
    <variation>G</variation>
    <location>
        <position position="153"/>
    </location>
</feature>
<feature type="strand" evidence="7">
    <location>
        <begin position="3"/>
        <end position="14"/>
    </location>
</feature>
<feature type="helix" evidence="7">
    <location>
        <begin position="16"/>
        <end position="24"/>
    </location>
</feature>
<feature type="helix" evidence="7">
    <location>
        <begin position="27"/>
        <end position="34"/>
    </location>
</feature>
<feature type="turn" evidence="7">
    <location>
        <begin position="36"/>
        <end position="38"/>
    </location>
</feature>
<feature type="strand" evidence="7">
    <location>
        <begin position="41"/>
        <end position="50"/>
    </location>
</feature>
<feature type="strand" evidence="7">
    <location>
        <begin position="54"/>
        <end position="58"/>
    </location>
</feature>
<feature type="strand" evidence="7">
    <location>
        <begin position="67"/>
        <end position="75"/>
    </location>
</feature>
<feature type="turn" evidence="7">
    <location>
        <begin position="77"/>
        <end position="79"/>
    </location>
</feature>
<feature type="strand" evidence="7">
    <location>
        <begin position="81"/>
        <end position="89"/>
    </location>
</feature>
<feature type="turn" evidence="7">
    <location>
        <begin position="93"/>
        <end position="95"/>
    </location>
</feature>
<feature type="strand" evidence="7">
    <location>
        <begin position="96"/>
        <end position="108"/>
    </location>
</feature>
<feature type="strand" evidence="7">
    <location>
        <begin position="111"/>
        <end position="122"/>
    </location>
</feature>
<feature type="helix" evidence="7">
    <location>
        <begin position="130"/>
        <end position="153"/>
    </location>
</feature>
<feature type="turn" evidence="7">
    <location>
        <begin position="155"/>
        <end position="158"/>
    </location>
</feature>
<name>MAL11_MALDO</name>
<gene>
    <name evidence="3" type="primary">MALD1</name>
</gene>
<reference key="1">
    <citation type="submission" date="1994-12" db="EMBL/GenBank/DDBJ databases">
        <authorList>
            <person name="Schoening B."/>
            <person name="Ziegler W.H."/>
            <person name="Vieths S."/>
            <person name="Baltes W."/>
        </authorList>
    </citation>
    <scope>NUCLEOTIDE SEQUENCE [MRNA]</scope>
    <source>
        <strain>cv. Granny Smith</strain>
    </source>
</reference>
<reference key="2">
    <citation type="journal article" date="1995" name="Biochem. Biophys. Res. Commun.">
        <title>Cloning and sequencing of Mal d 1, the major allergen from apple (Malus domestica), and its immunological relationship to Bet v 1, the major birch pollen allergen.</title>
        <authorList>
            <person name="Vanek-Krebitz M."/>
            <person name="Hoffmann-Sommergruber K."/>
            <person name="Laimer da Camara Machado M."/>
            <person name="Susani M."/>
            <person name="Ebner C."/>
            <person name="Kraft D."/>
            <person name="Scheiner O."/>
            <person name="Breiteneder H."/>
        </authorList>
    </citation>
    <scope>NUCLEOTIDE SEQUENCE [MRNA]</scope>
    <source>
        <strain>cv. Golden Delicious</strain>
        <tissue>Mesocarp</tissue>
    </source>
</reference>
<reference key="3">
    <citation type="journal article" date="1994" name="Int. Arch. Allergy Immunol.">
        <title>Characterization of the 18-kDa apple allergen by two-dimensional immunoblotting and microsequencing.</title>
        <authorList>
            <person name="Vieths S."/>
            <person name="Schoening B."/>
            <person name="Petersen A."/>
        </authorList>
    </citation>
    <scope>PROTEIN SEQUENCE OF 2-26</scope>
    <source>
        <strain>cv. Golden Delicious</strain>
    </source>
</reference>
<reference key="4">
    <citation type="journal article" date="2006" name="Int. Arch. Allergy Immunol.">
        <title>Mutational analysis of amino acid positions crucial for IgE-binding epitopes of the major apple (Malus domestica) allergen, Mal d 1.</title>
        <authorList>
            <person name="Ma Y."/>
            <person name="Gadermaier G."/>
            <person name="Bohle B."/>
            <person name="Bolhaar S."/>
            <person name="Knulst A."/>
            <person name="Markovic-Housley Z."/>
            <person name="Breiteneder H."/>
            <person name="Briza P."/>
            <person name="Hoffmann-Sommergruber K."/>
            <person name="Ferreira F."/>
        </authorList>
    </citation>
    <scope>PROTEIN SEQUENCE OF 2-6</scope>
    <scope>MUTAGENESIS OF THR-11; ILE-31; THR-58; THR-113 AND ILE-114</scope>
    <scope>ALLERGEN</scope>
</reference>
<reference key="5">
    <citation type="journal article" date="2016" name="Biomol. NMR. Assign.">
        <title>NMR resonance assignments of the major apple allergen Mal d 1.</title>
        <authorList>
            <person name="Ahammer L."/>
            <person name="Grutsch S."/>
            <person name="Tollinger M."/>
        </authorList>
    </citation>
    <scope>STRUCTURE BY NMR OF 2-159</scope>
    <source>
        <strain>cv. Granny Smith</strain>
    </source>
</reference>
<reference key="6">
    <citation type="journal article" date="2017" name="J. Agric. Food Chem.">
        <title>Structure of the major apple allergen Mald1.</title>
        <authorList>
            <person name="Ahammer L."/>
            <person name="Grutsch S."/>
            <person name="Kamenik A.S."/>
            <person name="Liedl K.R."/>
            <person name="Tollinger M."/>
        </authorList>
    </citation>
    <scope>STRUCTURE BY NMR OF 2-159</scope>
    <source>
        <strain>cv. Granny Smith</strain>
        <tissue>Fruit</tissue>
    </source>
</reference>
<sequence length="159" mass="17651">MGVYTFENEFTSEIPPSRLFKAFVLDADNLIPKIAPQAIKQAEILEGNGGPGTIKKITFGEGSQYGYVKHRIDSIDEASYSYSYTLIEGDALTDTIEKISYETKLVACGSGSTIKSISHYHTKGNIEIKEEHVKVGKEKAHGLFKLIESYLKDHPDAYN</sequence>
<dbReference type="EMBL" id="X83672">
    <property type="protein sequence ID" value="CAA58646.1"/>
    <property type="molecule type" value="mRNA"/>
</dbReference>
<dbReference type="EMBL" id="Z48969">
    <property type="protein sequence ID" value="CAA88833.1"/>
    <property type="molecule type" value="mRNA"/>
</dbReference>
<dbReference type="PIR" id="JC4276">
    <property type="entry name" value="JC4276"/>
</dbReference>
<dbReference type="PDB" id="5MMU">
    <property type="method" value="NMR"/>
    <property type="chains" value="A=2-159"/>
</dbReference>
<dbReference type="PDBsum" id="5MMU"/>
<dbReference type="BMRB" id="P43211"/>
<dbReference type="SMR" id="P43211"/>
<dbReference type="Allergome" id="1447">
    <property type="allergen name" value="Mal d 1.0101"/>
</dbReference>
<dbReference type="Allergome" id="1448">
    <property type="allergen name" value="Mal d 1.0102"/>
</dbReference>
<dbReference type="Allergome" id="464">
    <property type="allergen name" value="Mal d 1"/>
</dbReference>
<dbReference type="GO" id="GO:0005737">
    <property type="term" value="C:cytoplasm"/>
    <property type="evidence" value="ECO:0007669"/>
    <property type="project" value="TreeGrafter"/>
</dbReference>
<dbReference type="GO" id="GO:0005634">
    <property type="term" value="C:nucleus"/>
    <property type="evidence" value="ECO:0007669"/>
    <property type="project" value="TreeGrafter"/>
</dbReference>
<dbReference type="GO" id="GO:0010427">
    <property type="term" value="F:abscisic acid binding"/>
    <property type="evidence" value="ECO:0007669"/>
    <property type="project" value="InterPro"/>
</dbReference>
<dbReference type="GO" id="GO:0004864">
    <property type="term" value="F:protein phosphatase inhibitor activity"/>
    <property type="evidence" value="ECO:0007669"/>
    <property type="project" value="InterPro"/>
</dbReference>
<dbReference type="GO" id="GO:0038023">
    <property type="term" value="F:signaling receptor activity"/>
    <property type="evidence" value="ECO:0007669"/>
    <property type="project" value="InterPro"/>
</dbReference>
<dbReference type="GO" id="GO:0009738">
    <property type="term" value="P:abscisic acid-activated signaling pathway"/>
    <property type="evidence" value="ECO:0007669"/>
    <property type="project" value="InterPro"/>
</dbReference>
<dbReference type="GO" id="GO:0006952">
    <property type="term" value="P:defense response"/>
    <property type="evidence" value="ECO:0007669"/>
    <property type="project" value="UniProtKB-KW"/>
</dbReference>
<dbReference type="CDD" id="cd07816">
    <property type="entry name" value="Bet_v1-like"/>
    <property type="match status" value="1"/>
</dbReference>
<dbReference type="FunFam" id="3.30.530.20:FF:000007">
    <property type="entry name" value="Major pollen allergen Bet v 1-A"/>
    <property type="match status" value="1"/>
</dbReference>
<dbReference type="Gene3D" id="3.30.530.20">
    <property type="match status" value="1"/>
</dbReference>
<dbReference type="InterPro" id="IPR000916">
    <property type="entry name" value="Bet_v_I/MLP"/>
</dbReference>
<dbReference type="InterPro" id="IPR024949">
    <property type="entry name" value="Bet_v_I_allergen"/>
</dbReference>
<dbReference type="InterPro" id="IPR050279">
    <property type="entry name" value="Plant_def-hormone_signal"/>
</dbReference>
<dbReference type="InterPro" id="IPR023393">
    <property type="entry name" value="START-like_dom_sf"/>
</dbReference>
<dbReference type="PANTHER" id="PTHR31213">
    <property type="entry name" value="OS08G0374000 PROTEIN-RELATED"/>
    <property type="match status" value="1"/>
</dbReference>
<dbReference type="PANTHER" id="PTHR31213:SF55">
    <property type="entry name" value="STRESS-INDUCED PROTEIN SAM22"/>
    <property type="match status" value="1"/>
</dbReference>
<dbReference type="Pfam" id="PF00407">
    <property type="entry name" value="Bet_v_1"/>
    <property type="match status" value="1"/>
</dbReference>
<dbReference type="PRINTS" id="PR00634">
    <property type="entry name" value="BETALLERGEN"/>
</dbReference>
<dbReference type="SUPFAM" id="SSF55961">
    <property type="entry name" value="Bet v1-like"/>
    <property type="match status" value="1"/>
</dbReference>
<dbReference type="PROSITE" id="PS00451">
    <property type="entry name" value="PATHOGENESIS_BETVI"/>
    <property type="match status" value="1"/>
</dbReference>
<proteinExistence type="evidence at protein level"/>
<keyword id="KW-0002">3D-structure</keyword>
<keyword id="KW-0020">Allergen</keyword>
<keyword id="KW-0903">Direct protein sequencing</keyword>
<keyword id="KW-0568">Pathogenesis-related protein</keyword>
<keyword id="KW-0611">Plant defense</keyword>
<evidence type="ECO:0000269" key="1">
    <source>
    </source>
</evidence>
<evidence type="ECO:0000269" key="2">
    <source>
    </source>
</evidence>
<evidence type="ECO:0000303" key="3">
    <source>
    </source>
</evidence>
<evidence type="ECO:0000305" key="4"/>
<evidence type="ECO:0000305" key="5">
    <source>
    </source>
</evidence>
<evidence type="ECO:0000305" key="6">
    <source>
    </source>
</evidence>
<evidence type="ECO:0007829" key="7">
    <source>
        <dbReference type="PDB" id="5MMU"/>
    </source>
</evidence>
<accession>P43211</accession>
<organism>
    <name type="scientific">Malus domestica</name>
    <name type="common">Apple</name>
    <name type="synonym">Pyrus malus</name>
    <dbReference type="NCBI Taxonomy" id="3750"/>
    <lineage>
        <taxon>Eukaryota</taxon>
        <taxon>Viridiplantae</taxon>
        <taxon>Streptophyta</taxon>
        <taxon>Embryophyta</taxon>
        <taxon>Tracheophyta</taxon>
        <taxon>Spermatophyta</taxon>
        <taxon>Magnoliopsida</taxon>
        <taxon>eudicotyledons</taxon>
        <taxon>Gunneridae</taxon>
        <taxon>Pentapetalae</taxon>
        <taxon>rosids</taxon>
        <taxon>fabids</taxon>
        <taxon>Rosales</taxon>
        <taxon>Rosaceae</taxon>
        <taxon>Amygdaloideae</taxon>
        <taxon>Maleae</taxon>
        <taxon>Malus</taxon>
    </lineage>
</organism>